<evidence type="ECO:0000255" key="1">
    <source>
        <dbReference type="HAMAP-Rule" id="MF_00185"/>
    </source>
</evidence>
<reference key="1">
    <citation type="submission" date="2006-10" db="EMBL/GenBank/DDBJ databases">
        <title>Complete sequence of chromosome of Pelobacter propionicus DSM 2379.</title>
        <authorList>
            <consortium name="US DOE Joint Genome Institute"/>
            <person name="Copeland A."/>
            <person name="Lucas S."/>
            <person name="Lapidus A."/>
            <person name="Barry K."/>
            <person name="Detter J.C."/>
            <person name="Glavina del Rio T."/>
            <person name="Hammon N."/>
            <person name="Israni S."/>
            <person name="Dalin E."/>
            <person name="Tice H."/>
            <person name="Pitluck S."/>
            <person name="Saunders E."/>
            <person name="Brettin T."/>
            <person name="Bruce D."/>
            <person name="Han C."/>
            <person name="Tapia R."/>
            <person name="Schmutz J."/>
            <person name="Larimer F."/>
            <person name="Land M."/>
            <person name="Hauser L."/>
            <person name="Kyrpides N."/>
            <person name="Kim E."/>
            <person name="Lovley D."/>
            <person name="Richardson P."/>
        </authorList>
    </citation>
    <scope>NUCLEOTIDE SEQUENCE [LARGE SCALE GENOMIC DNA]</scope>
    <source>
        <strain>DSM 2379 / NBRC 103807 / OttBd1</strain>
    </source>
</reference>
<dbReference type="EC" id="2.5.1.75" evidence="1"/>
<dbReference type="EMBL" id="CP000482">
    <property type="protein sequence ID" value="ABL00561.1"/>
    <property type="molecule type" value="Genomic_DNA"/>
</dbReference>
<dbReference type="RefSeq" id="WP_011736796.1">
    <property type="nucleotide sequence ID" value="NC_008609.1"/>
</dbReference>
<dbReference type="SMR" id="A1AT90"/>
<dbReference type="STRING" id="338966.Ppro_2963"/>
<dbReference type="KEGG" id="ppd:Ppro_2963"/>
<dbReference type="eggNOG" id="COG0324">
    <property type="taxonomic scope" value="Bacteria"/>
</dbReference>
<dbReference type="HOGENOM" id="CLU_032616_0_1_7"/>
<dbReference type="OrthoDB" id="9776390at2"/>
<dbReference type="Proteomes" id="UP000006732">
    <property type="component" value="Chromosome"/>
</dbReference>
<dbReference type="GO" id="GO:0005524">
    <property type="term" value="F:ATP binding"/>
    <property type="evidence" value="ECO:0007669"/>
    <property type="project" value="UniProtKB-UniRule"/>
</dbReference>
<dbReference type="GO" id="GO:0052381">
    <property type="term" value="F:tRNA dimethylallyltransferase activity"/>
    <property type="evidence" value="ECO:0007669"/>
    <property type="project" value="UniProtKB-UniRule"/>
</dbReference>
<dbReference type="GO" id="GO:0006400">
    <property type="term" value="P:tRNA modification"/>
    <property type="evidence" value="ECO:0007669"/>
    <property type="project" value="TreeGrafter"/>
</dbReference>
<dbReference type="Gene3D" id="1.10.20.140">
    <property type="match status" value="1"/>
</dbReference>
<dbReference type="Gene3D" id="3.40.50.300">
    <property type="entry name" value="P-loop containing nucleotide triphosphate hydrolases"/>
    <property type="match status" value="1"/>
</dbReference>
<dbReference type="HAMAP" id="MF_00185">
    <property type="entry name" value="IPP_trans"/>
    <property type="match status" value="1"/>
</dbReference>
<dbReference type="InterPro" id="IPR039657">
    <property type="entry name" value="Dimethylallyltransferase"/>
</dbReference>
<dbReference type="InterPro" id="IPR018022">
    <property type="entry name" value="IPT"/>
</dbReference>
<dbReference type="InterPro" id="IPR027417">
    <property type="entry name" value="P-loop_NTPase"/>
</dbReference>
<dbReference type="NCBIfam" id="TIGR00174">
    <property type="entry name" value="miaA"/>
    <property type="match status" value="1"/>
</dbReference>
<dbReference type="PANTHER" id="PTHR11088">
    <property type="entry name" value="TRNA DIMETHYLALLYLTRANSFERASE"/>
    <property type="match status" value="1"/>
</dbReference>
<dbReference type="PANTHER" id="PTHR11088:SF60">
    <property type="entry name" value="TRNA DIMETHYLALLYLTRANSFERASE"/>
    <property type="match status" value="1"/>
</dbReference>
<dbReference type="Pfam" id="PF01715">
    <property type="entry name" value="IPPT"/>
    <property type="match status" value="1"/>
</dbReference>
<dbReference type="SUPFAM" id="SSF52540">
    <property type="entry name" value="P-loop containing nucleoside triphosphate hydrolases"/>
    <property type="match status" value="2"/>
</dbReference>
<gene>
    <name evidence="1" type="primary">miaA1</name>
    <name type="ordered locus">Ppro_2963</name>
</gene>
<organism>
    <name type="scientific">Pelobacter propionicus (strain DSM 2379 / NBRC 103807 / OttBd1)</name>
    <dbReference type="NCBI Taxonomy" id="338966"/>
    <lineage>
        <taxon>Bacteria</taxon>
        <taxon>Pseudomonadati</taxon>
        <taxon>Thermodesulfobacteriota</taxon>
        <taxon>Desulfuromonadia</taxon>
        <taxon>Desulfuromonadales</taxon>
        <taxon>Desulfuromonadaceae</taxon>
        <taxon>Pelobacter</taxon>
    </lineage>
</organism>
<name>MIAA1_PELPD</name>
<accession>A1AT90</accession>
<keyword id="KW-0067">ATP-binding</keyword>
<keyword id="KW-0460">Magnesium</keyword>
<keyword id="KW-0547">Nucleotide-binding</keyword>
<keyword id="KW-1185">Reference proteome</keyword>
<keyword id="KW-0808">Transferase</keyword>
<keyword id="KW-0819">tRNA processing</keyword>
<feature type="chain" id="PRO_0000377257" description="tRNA dimethylallyltransferase 1">
    <location>
        <begin position="1"/>
        <end position="309"/>
    </location>
</feature>
<feature type="region of interest" description="Interaction with substrate tRNA" evidence="1">
    <location>
        <begin position="39"/>
        <end position="42"/>
    </location>
</feature>
<feature type="binding site" evidence="1">
    <location>
        <begin position="14"/>
        <end position="21"/>
    </location>
    <ligand>
        <name>ATP</name>
        <dbReference type="ChEBI" id="CHEBI:30616"/>
    </ligand>
</feature>
<feature type="binding site" evidence="1">
    <location>
        <begin position="16"/>
        <end position="21"/>
    </location>
    <ligand>
        <name>substrate</name>
    </ligand>
</feature>
<feature type="site" description="Interaction with substrate tRNA" evidence="1">
    <location>
        <position position="105"/>
    </location>
</feature>
<feature type="site" description="Interaction with substrate tRNA" evidence="1">
    <location>
        <position position="127"/>
    </location>
</feature>
<proteinExistence type="inferred from homology"/>
<comment type="function">
    <text evidence="1">Catalyzes the transfer of a dimethylallyl group onto the adenine at position 37 in tRNAs that read codons beginning with uridine, leading to the formation of N6-(dimethylallyl)adenosine (i(6)A).</text>
</comment>
<comment type="catalytic activity">
    <reaction evidence="1">
        <text>adenosine(37) in tRNA + dimethylallyl diphosphate = N(6)-dimethylallyladenosine(37) in tRNA + diphosphate</text>
        <dbReference type="Rhea" id="RHEA:26482"/>
        <dbReference type="Rhea" id="RHEA-COMP:10162"/>
        <dbReference type="Rhea" id="RHEA-COMP:10375"/>
        <dbReference type="ChEBI" id="CHEBI:33019"/>
        <dbReference type="ChEBI" id="CHEBI:57623"/>
        <dbReference type="ChEBI" id="CHEBI:74411"/>
        <dbReference type="ChEBI" id="CHEBI:74415"/>
        <dbReference type="EC" id="2.5.1.75"/>
    </reaction>
</comment>
<comment type="cofactor">
    <cofactor evidence="1">
        <name>Mg(2+)</name>
        <dbReference type="ChEBI" id="CHEBI:18420"/>
    </cofactor>
</comment>
<comment type="subunit">
    <text evidence="1">Monomer.</text>
</comment>
<comment type="similarity">
    <text evidence="1">Belongs to the IPP transferase family.</text>
</comment>
<protein>
    <recommendedName>
        <fullName evidence="1">tRNA dimethylallyltransferase 1</fullName>
        <ecNumber evidence="1">2.5.1.75</ecNumber>
    </recommendedName>
    <alternativeName>
        <fullName evidence="1">Dimethylallyl diphosphate:tRNA dimethylallyltransferase 1</fullName>
        <shortName evidence="1">DMAPP:tRNA dimethylallyltransferase 1</shortName>
        <shortName evidence="1">DMATase 1</shortName>
    </alternativeName>
    <alternativeName>
        <fullName evidence="1">Isopentenyl-diphosphate:tRNA isopentenyltransferase 1</fullName>
        <shortName evidence="1">IPP transferase 1</shortName>
        <shortName evidence="1">IPPT 1</shortName>
        <shortName evidence="1">IPTase 1</shortName>
    </alternativeName>
</protein>
<sequence length="309" mass="34596">MTGPALPRILIICGPTASGKSELAVRLARELDGEIVNADSMQIHRGMDIGTAKPTVGEMGAVPHHLLDVADPDRPFSAADFSDAASQAISGIIRRGKRPIVVGGTGLYLRALLHGLVDSPSGAGELRRRLQEEARELGNQAMLERLRRVDPQLATTIHPNNLVRIIRGLEVYHLTGIPLSRYQHEHGFAAERYRSLAIGIRVERRELYERIERRVDRMLATGLLDEVRALLEAGFGPELKAMRSIGYRESCDFLAGNSSLEETTALIKRNTRRYAKRQLTWFNADPEIIWLEYPEKFATILRHCIAFFE</sequence>